<reference key="1">
    <citation type="journal article" date="1999" name="Nature">
        <title>Sequence and analysis of chromosome 2 of the plant Arabidopsis thaliana.</title>
        <authorList>
            <person name="Lin X."/>
            <person name="Kaul S."/>
            <person name="Rounsley S.D."/>
            <person name="Shea T.P."/>
            <person name="Benito M.-I."/>
            <person name="Town C.D."/>
            <person name="Fujii C.Y."/>
            <person name="Mason T.M."/>
            <person name="Bowman C.L."/>
            <person name="Barnstead M.E."/>
            <person name="Feldblyum T.V."/>
            <person name="Buell C.R."/>
            <person name="Ketchum K.A."/>
            <person name="Lee J.J."/>
            <person name="Ronning C.M."/>
            <person name="Koo H.L."/>
            <person name="Moffat K.S."/>
            <person name="Cronin L.A."/>
            <person name="Shen M."/>
            <person name="Pai G."/>
            <person name="Van Aken S."/>
            <person name="Umayam L."/>
            <person name="Tallon L.J."/>
            <person name="Gill J.E."/>
            <person name="Adams M.D."/>
            <person name="Carrera A.J."/>
            <person name="Creasy T.H."/>
            <person name="Goodman H.M."/>
            <person name="Somerville C.R."/>
            <person name="Copenhaver G.P."/>
            <person name="Preuss D."/>
            <person name="Nierman W.C."/>
            <person name="White O."/>
            <person name="Eisen J.A."/>
            <person name="Salzberg S.L."/>
            <person name="Fraser C.M."/>
            <person name="Venter J.C."/>
        </authorList>
    </citation>
    <scope>NUCLEOTIDE SEQUENCE [LARGE SCALE GENOMIC DNA]</scope>
    <source>
        <strain>cv. Columbia</strain>
    </source>
</reference>
<reference key="2">
    <citation type="journal article" date="2017" name="Plant J.">
        <title>Araport11: a complete reannotation of the Arabidopsis thaliana reference genome.</title>
        <authorList>
            <person name="Cheng C.Y."/>
            <person name="Krishnakumar V."/>
            <person name="Chan A.P."/>
            <person name="Thibaud-Nissen F."/>
            <person name="Schobel S."/>
            <person name="Town C.D."/>
        </authorList>
    </citation>
    <scope>GENOME REANNOTATION</scope>
    <source>
        <strain>cv. Columbia</strain>
    </source>
</reference>
<reference key="3">
    <citation type="submission" date="2005-04" db="EMBL/GenBank/DDBJ databases">
        <title>Arabidopsis cDNA clones.</title>
        <authorList>
            <person name="Shinn P."/>
            <person name="Chen H."/>
            <person name="Cheuk R.F."/>
            <person name="Kim C.J."/>
            <person name="Ecker J.R."/>
        </authorList>
    </citation>
    <scope>NUCLEOTIDE SEQUENCE [LARGE SCALE MRNA]</scope>
    <source>
        <strain>cv. Columbia</strain>
    </source>
</reference>
<reference key="4">
    <citation type="journal article" date="2001" name="Plant Physiol.">
        <title>The organization of cytoplasmic ribosomal protein genes in the Arabidopsis genome.</title>
        <authorList>
            <person name="Barakat A."/>
            <person name="Szick-Miranda K."/>
            <person name="Chang I.-F."/>
            <person name="Guyot R."/>
            <person name="Blanc G."/>
            <person name="Cooke R."/>
            <person name="Delseny M."/>
            <person name="Bailey-Serres J."/>
        </authorList>
    </citation>
    <scope>GENE FAMILY ORGANIZATION</scope>
    <scope>NOMENCLATURE</scope>
</reference>
<reference key="5">
    <citation type="journal article" date="2023" name="Plant Cell">
        <title>An updated nomenclature for plant ribosomal protein genes.</title>
        <authorList>
            <person name="Scarpin M.R."/>
            <person name="Busche M."/>
            <person name="Martinez R.E."/>
            <person name="Harper L.C."/>
            <person name="Reiser L."/>
            <person name="Szakonyi D."/>
            <person name="Merchante C."/>
            <person name="Lan T."/>
            <person name="Xiong W."/>
            <person name="Mo B."/>
            <person name="Tang G."/>
            <person name="Chen X."/>
            <person name="Bailey-Serres J."/>
            <person name="Browning K.S."/>
            <person name="Brunkard J.O."/>
        </authorList>
    </citation>
    <scope>NOMENCLATURE</scope>
</reference>
<comment type="similarity">
    <text evidence="2">Belongs to the eukaryotic ribosomal protein eL27 family.</text>
</comment>
<proteinExistence type="evidence at transcript level"/>
<organism>
    <name type="scientific">Arabidopsis thaliana</name>
    <name type="common">Mouse-ear cress</name>
    <dbReference type="NCBI Taxonomy" id="3702"/>
    <lineage>
        <taxon>Eukaryota</taxon>
        <taxon>Viridiplantae</taxon>
        <taxon>Streptophyta</taxon>
        <taxon>Embryophyta</taxon>
        <taxon>Tracheophyta</taxon>
        <taxon>Spermatophyta</taxon>
        <taxon>Magnoliopsida</taxon>
        <taxon>eudicotyledons</taxon>
        <taxon>Gunneridae</taxon>
        <taxon>Pentapetalae</taxon>
        <taxon>rosids</taxon>
        <taxon>malvids</taxon>
        <taxon>Brassicales</taxon>
        <taxon>Brassicaceae</taxon>
        <taxon>Camelineae</taxon>
        <taxon>Arabidopsis</taxon>
    </lineage>
</organism>
<gene>
    <name type="primary">RPL27A</name>
    <name type="ordered locus">At2g32220</name>
    <name type="ORF">F22D22.3</name>
</gene>
<evidence type="ECO:0000303" key="1">
    <source>
    </source>
</evidence>
<evidence type="ECO:0000305" key="2"/>
<accession>Q9SKX8</accession>
<protein>
    <recommendedName>
        <fullName evidence="1">Large ribosomal subunit protein eL27z</fullName>
    </recommendedName>
    <alternativeName>
        <fullName>60S ribosomal protein L27-1</fullName>
    </alternativeName>
</protein>
<feature type="chain" id="PRO_0000244740" description="Large ribosomal subunit protein eL27z">
    <location>
        <begin position="1"/>
        <end position="135"/>
    </location>
</feature>
<dbReference type="EMBL" id="AC006223">
    <property type="protein sequence ID" value="AAD15383.1"/>
    <property type="molecule type" value="Genomic_DNA"/>
</dbReference>
<dbReference type="EMBL" id="CP002685">
    <property type="protein sequence ID" value="AEC08651.1"/>
    <property type="molecule type" value="Genomic_DNA"/>
</dbReference>
<dbReference type="EMBL" id="BT021972">
    <property type="protein sequence ID" value="AAY17409.1"/>
    <property type="molecule type" value="mRNA"/>
</dbReference>
<dbReference type="PIR" id="D84730">
    <property type="entry name" value="D84730"/>
</dbReference>
<dbReference type="RefSeq" id="NP_180781.1">
    <property type="nucleotide sequence ID" value="NM_128781.3"/>
</dbReference>
<dbReference type="SMR" id="Q9SKX8"/>
<dbReference type="BioGRID" id="3128">
    <property type="interactions" value="182"/>
</dbReference>
<dbReference type="FunCoup" id="Q9SKX8">
    <property type="interactions" value="2817"/>
</dbReference>
<dbReference type="STRING" id="3702.Q9SKX8"/>
<dbReference type="PaxDb" id="3702-AT2G32220.1"/>
<dbReference type="ProteomicsDB" id="226887"/>
<dbReference type="EnsemblPlants" id="AT2G32220.1">
    <property type="protein sequence ID" value="AT2G32220.1"/>
    <property type="gene ID" value="AT2G32220"/>
</dbReference>
<dbReference type="GeneID" id="817781"/>
<dbReference type="Gramene" id="AT2G32220.1">
    <property type="protein sequence ID" value="AT2G32220.1"/>
    <property type="gene ID" value="AT2G32220"/>
</dbReference>
<dbReference type="KEGG" id="ath:AT2G32220"/>
<dbReference type="Araport" id="AT2G32220"/>
<dbReference type="TAIR" id="AT2G32220"/>
<dbReference type="eggNOG" id="KOG3418">
    <property type="taxonomic scope" value="Eukaryota"/>
</dbReference>
<dbReference type="HOGENOM" id="CLU_067359_0_1_1"/>
<dbReference type="InParanoid" id="Q9SKX8"/>
<dbReference type="OMA" id="LKHKTQQ"/>
<dbReference type="OrthoDB" id="1083190at2759"/>
<dbReference type="PhylomeDB" id="Q9SKX8"/>
<dbReference type="PRO" id="PR:Q9SKX8"/>
<dbReference type="Proteomes" id="UP000006548">
    <property type="component" value="Chromosome 2"/>
</dbReference>
<dbReference type="ExpressionAtlas" id="Q9SKX8">
    <property type="expression patterns" value="baseline and differential"/>
</dbReference>
<dbReference type="GO" id="GO:0022625">
    <property type="term" value="C:cytosolic large ribosomal subunit"/>
    <property type="evidence" value="ECO:0007005"/>
    <property type="project" value="TAIR"/>
</dbReference>
<dbReference type="GO" id="GO:0005783">
    <property type="term" value="C:endoplasmic reticulum"/>
    <property type="evidence" value="ECO:0007005"/>
    <property type="project" value="TAIR"/>
</dbReference>
<dbReference type="GO" id="GO:0003735">
    <property type="term" value="F:structural constituent of ribosome"/>
    <property type="evidence" value="ECO:0000314"/>
    <property type="project" value="CAFA"/>
</dbReference>
<dbReference type="GO" id="GO:0006412">
    <property type="term" value="P:translation"/>
    <property type="evidence" value="ECO:0007669"/>
    <property type="project" value="InterPro"/>
</dbReference>
<dbReference type="CDD" id="cd06090">
    <property type="entry name" value="KOW_RPL27"/>
    <property type="match status" value="1"/>
</dbReference>
<dbReference type="FunFam" id="2.30.30.770:FF:000001">
    <property type="entry name" value="60S ribosomal protein L27"/>
    <property type="match status" value="1"/>
</dbReference>
<dbReference type="Gene3D" id="2.30.30.770">
    <property type="match status" value="1"/>
</dbReference>
<dbReference type="InterPro" id="IPR001141">
    <property type="entry name" value="Ribosomal_eL27"/>
</dbReference>
<dbReference type="InterPro" id="IPR018262">
    <property type="entry name" value="Ribosomal_eL27_CS"/>
</dbReference>
<dbReference type="InterPro" id="IPR041991">
    <property type="entry name" value="Ribosomal_eL27_KOW"/>
</dbReference>
<dbReference type="InterPro" id="IPR038655">
    <property type="entry name" value="Ribosomal_eL27_sf"/>
</dbReference>
<dbReference type="InterPro" id="IPR008991">
    <property type="entry name" value="Translation_prot_SH3-like_sf"/>
</dbReference>
<dbReference type="PANTHER" id="PTHR10497">
    <property type="entry name" value="60S RIBOSOMAL PROTEIN L27"/>
    <property type="match status" value="1"/>
</dbReference>
<dbReference type="Pfam" id="PF01777">
    <property type="entry name" value="Ribosomal_L27e"/>
    <property type="match status" value="1"/>
</dbReference>
<dbReference type="SUPFAM" id="SSF50104">
    <property type="entry name" value="Translation proteins SH3-like domain"/>
    <property type="match status" value="1"/>
</dbReference>
<dbReference type="PROSITE" id="PS01107">
    <property type="entry name" value="RIBOSOMAL_L27E"/>
    <property type="match status" value="1"/>
</dbReference>
<keyword id="KW-1185">Reference proteome</keyword>
<keyword id="KW-0687">Ribonucleoprotein</keyword>
<keyword id="KW-0689">Ribosomal protein</keyword>
<name>RL271_ARATH</name>
<sequence>MVKCMKPGKAVILLQGRYTGKKAVIVKSFDDGTVEKKYGHCLVAGLKKYPSKVIRKDSAKKTAKKSRVKCFFKVINYQHVMPTRYTLDLDLKNVVSADAISSKDKKVTALKEAKAKFEERFKTGKNRWFFTKLRF</sequence>